<dbReference type="EC" id="2.4.1.21" evidence="1"/>
<dbReference type="EMBL" id="CP000127">
    <property type="protein sequence ID" value="ABA56633.1"/>
    <property type="molecule type" value="Genomic_DNA"/>
</dbReference>
<dbReference type="RefSeq" id="WP_011330231.1">
    <property type="nucleotide sequence ID" value="NC_007484.1"/>
</dbReference>
<dbReference type="SMR" id="Q3JEW3"/>
<dbReference type="STRING" id="323261.Noc_0100"/>
<dbReference type="CAZy" id="GT5">
    <property type="family name" value="Glycosyltransferase Family 5"/>
</dbReference>
<dbReference type="KEGG" id="noc:Noc_0100"/>
<dbReference type="eggNOG" id="COG0297">
    <property type="taxonomic scope" value="Bacteria"/>
</dbReference>
<dbReference type="HOGENOM" id="CLU_009583_18_3_6"/>
<dbReference type="InParanoid" id="Q3JEW3"/>
<dbReference type="UniPathway" id="UPA00164"/>
<dbReference type="Proteomes" id="UP000006838">
    <property type="component" value="Chromosome"/>
</dbReference>
<dbReference type="GO" id="GO:0009011">
    <property type="term" value="F:alpha-1,4-glucan glucosyltransferase (ADP-glucose donor) activity"/>
    <property type="evidence" value="ECO:0007669"/>
    <property type="project" value="UniProtKB-UniRule"/>
</dbReference>
<dbReference type="GO" id="GO:0004373">
    <property type="term" value="F:alpha-1,4-glucan glucosyltransferase (UDP-glucose donor) activity"/>
    <property type="evidence" value="ECO:0007669"/>
    <property type="project" value="InterPro"/>
</dbReference>
<dbReference type="GO" id="GO:0005978">
    <property type="term" value="P:glycogen biosynthetic process"/>
    <property type="evidence" value="ECO:0007669"/>
    <property type="project" value="UniProtKB-UniRule"/>
</dbReference>
<dbReference type="CDD" id="cd03791">
    <property type="entry name" value="GT5_Glycogen_synthase_DULL1-like"/>
    <property type="match status" value="1"/>
</dbReference>
<dbReference type="Gene3D" id="3.40.50.2000">
    <property type="entry name" value="Glycogen Phosphorylase B"/>
    <property type="match status" value="2"/>
</dbReference>
<dbReference type="HAMAP" id="MF_00484">
    <property type="entry name" value="Glycogen_synth"/>
    <property type="match status" value="1"/>
</dbReference>
<dbReference type="InterPro" id="IPR001296">
    <property type="entry name" value="Glyco_trans_1"/>
</dbReference>
<dbReference type="InterPro" id="IPR011835">
    <property type="entry name" value="GS/SS"/>
</dbReference>
<dbReference type="InterPro" id="IPR013534">
    <property type="entry name" value="Starch_synth_cat_dom"/>
</dbReference>
<dbReference type="NCBIfam" id="TIGR02095">
    <property type="entry name" value="glgA"/>
    <property type="match status" value="1"/>
</dbReference>
<dbReference type="NCBIfam" id="NF001905">
    <property type="entry name" value="PRK00654.2-4"/>
    <property type="match status" value="1"/>
</dbReference>
<dbReference type="PANTHER" id="PTHR46083">
    <property type="match status" value="1"/>
</dbReference>
<dbReference type="PANTHER" id="PTHR46083:SF1">
    <property type="entry name" value="GLYCOGEN SYNTHASE 2-RELATED"/>
    <property type="match status" value="1"/>
</dbReference>
<dbReference type="Pfam" id="PF08323">
    <property type="entry name" value="Glyco_transf_5"/>
    <property type="match status" value="1"/>
</dbReference>
<dbReference type="Pfam" id="PF00534">
    <property type="entry name" value="Glycos_transf_1"/>
    <property type="match status" value="1"/>
</dbReference>
<dbReference type="SUPFAM" id="SSF53756">
    <property type="entry name" value="UDP-Glycosyltransferase/glycogen phosphorylase"/>
    <property type="match status" value="1"/>
</dbReference>
<reference key="1">
    <citation type="journal article" date="2006" name="Appl. Environ. Microbiol.">
        <title>Complete genome sequence of the marine, chemolithoautotrophic, ammonia-oxidizing bacterium Nitrosococcus oceani ATCC 19707.</title>
        <authorList>
            <person name="Klotz M.G."/>
            <person name="Arp D.J."/>
            <person name="Chain P.S.G."/>
            <person name="El-Sheikh A.F."/>
            <person name="Hauser L.J."/>
            <person name="Hommes N.G."/>
            <person name="Larimer F.W."/>
            <person name="Malfatti S.A."/>
            <person name="Norton J.M."/>
            <person name="Poret-Peterson A.T."/>
            <person name="Vergez L.M."/>
            <person name="Ward B.B."/>
        </authorList>
    </citation>
    <scope>NUCLEOTIDE SEQUENCE [LARGE SCALE GENOMIC DNA]</scope>
    <source>
        <strain>ATCC 19707 / BCRC 17464 / JCM 30415 / NCIMB 11848 / C-107</strain>
    </source>
</reference>
<name>GLGA1_NITOC</name>
<proteinExistence type="inferred from homology"/>
<feature type="chain" id="PRO_0000230248" description="Glycogen synthase 1">
    <location>
        <begin position="1"/>
        <end position="487"/>
    </location>
</feature>
<feature type="binding site" evidence="1">
    <location>
        <position position="15"/>
    </location>
    <ligand>
        <name>ADP-alpha-D-glucose</name>
        <dbReference type="ChEBI" id="CHEBI:57498"/>
    </ligand>
</feature>
<gene>
    <name evidence="1" type="primary">glgA1</name>
    <name type="ordered locus">Noc_0100</name>
</gene>
<sequence>MYIVMITPECAPIAKVGGLGDVVQGLSNELSIRGNTVELILPKYDCMRYERIWGLEKTHNNLWVPYHDQWIPCDVYFGFAEGLKCFFIEPHNGFFQRGTYYGQPDDPQRFAFFCKAALEFMLRSNKYPEIIHCHDWQTGLVPVLLFEQYKYLGMTHPRVCYTLHNMRHQGVTGGHILQQVGLDPAAYMTPERLLDHTYPHGVNLMKGGIVFSNFITTVSPRYLDEIRYTDQGYGLQHTLHEHSQKLGGILNGVDYKVWNPDIDPYIAARYNLKTLDKKYENKTALRHRLWLRDEYKPIVGVISRLDPQKGVELIRHALFYCLANGCQFVLLGASASNSINADFWYLKQYLNDDPDCHLEIGYDEDLAHQIYAGADMLIVPSIYEPCGLTQMIAMKYGTVPIVRHVGGLADTVFDANYAHKPYHERNGFVFHDFNHEGIEAALHRAIGLWYEYPQYFRELMENGMRYDFSWNHPGQHYLNIYHHIQEI</sequence>
<organism>
    <name type="scientific">Nitrosococcus oceani (strain ATCC 19707 / BCRC 17464 / JCM 30415 / NCIMB 11848 / C-107)</name>
    <dbReference type="NCBI Taxonomy" id="323261"/>
    <lineage>
        <taxon>Bacteria</taxon>
        <taxon>Pseudomonadati</taxon>
        <taxon>Pseudomonadota</taxon>
        <taxon>Gammaproteobacteria</taxon>
        <taxon>Chromatiales</taxon>
        <taxon>Chromatiaceae</taxon>
        <taxon>Nitrosococcus</taxon>
    </lineage>
</organism>
<accession>Q3JEW3</accession>
<evidence type="ECO:0000255" key="1">
    <source>
        <dbReference type="HAMAP-Rule" id="MF_00484"/>
    </source>
</evidence>
<protein>
    <recommendedName>
        <fullName evidence="1">Glycogen synthase 1</fullName>
        <ecNumber evidence="1">2.4.1.21</ecNumber>
    </recommendedName>
    <alternativeName>
        <fullName evidence="1">Starch [bacterial glycogen] synthase 1</fullName>
    </alternativeName>
</protein>
<comment type="function">
    <text evidence="1">Synthesizes alpha-1,4-glucan chains using ADP-glucose.</text>
</comment>
<comment type="catalytic activity">
    <reaction evidence="1">
        <text>[(1-&gt;4)-alpha-D-glucosyl](n) + ADP-alpha-D-glucose = [(1-&gt;4)-alpha-D-glucosyl](n+1) + ADP + H(+)</text>
        <dbReference type="Rhea" id="RHEA:18189"/>
        <dbReference type="Rhea" id="RHEA-COMP:9584"/>
        <dbReference type="Rhea" id="RHEA-COMP:9587"/>
        <dbReference type="ChEBI" id="CHEBI:15378"/>
        <dbReference type="ChEBI" id="CHEBI:15444"/>
        <dbReference type="ChEBI" id="CHEBI:57498"/>
        <dbReference type="ChEBI" id="CHEBI:456216"/>
        <dbReference type="EC" id="2.4.1.21"/>
    </reaction>
</comment>
<comment type="pathway">
    <text evidence="1">Glycan biosynthesis; glycogen biosynthesis.</text>
</comment>
<comment type="similarity">
    <text evidence="1">Belongs to the glycosyltransferase 1 family. Bacterial/plant glycogen synthase subfamily.</text>
</comment>
<keyword id="KW-0320">Glycogen biosynthesis</keyword>
<keyword id="KW-0328">Glycosyltransferase</keyword>
<keyword id="KW-1185">Reference proteome</keyword>
<keyword id="KW-0808">Transferase</keyword>